<gene>
    <name evidence="1" type="primary">pyrG</name>
    <name type="ordered locus">GSU1895</name>
</gene>
<organism>
    <name type="scientific">Geobacter sulfurreducens (strain ATCC 51573 / DSM 12127 / PCA)</name>
    <dbReference type="NCBI Taxonomy" id="243231"/>
    <lineage>
        <taxon>Bacteria</taxon>
        <taxon>Pseudomonadati</taxon>
        <taxon>Thermodesulfobacteriota</taxon>
        <taxon>Desulfuromonadia</taxon>
        <taxon>Geobacterales</taxon>
        <taxon>Geobacteraceae</taxon>
        <taxon>Geobacter</taxon>
    </lineage>
</organism>
<accession>Q74BY3</accession>
<sequence length="536" mass="59429">MKTKFIFVTGGVVSSIGKGLASASLGALLESRGLRVTMQKLDPYINVDPGTMSPFQHGEVFVTDDGAETDLDLGHYERYTSARLSKRSNFTTGQVYFSVIEKERRGDYLGGTVQVIPHITDEIKHKILENAKGADVAIVEVGGTVGDIESLPFLEAIRQFKADRGAGNVLYIHVTLVPHIKTAGELKTKPTQHSVKELREIGIQPDILICRCEMELPRDMKAKIALFCNVEEKAVITSTDAEHIYAVPLALHKEGLDEQVVEKLNIWTKAPDLSPWHSVVEKLRSPLRGEVRIAIVGKYVNLTESYKSLSEALTHGGIANDCRVVLTYLDSERIESEGIGSSFDDIDAILVPGGFGERGTEGKIKAIEYARTQKIPFFGICLGMQMAVVEYARNVCGLEDACSSEFRPDCANPVISLMEEQRDIDRLGGTMRLGAYPCSLTKGTFAQKAYGSLEISERHRHRYEYNNAFRETLVANGLVVSGLYKEGDLVEIVEVADHPWFLGCQFHPEFKSKPLNPHPLFRAFIAAALDRKDKRR</sequence>
<evidence type="ECO:0000255" key="1">
    <source>
        <dbReference type="HAMAP-Rule" id="MF_01227"/>
    </source>
</evidence>
<reference key="1">
    <citation type="journal article" date="2003" name="Science">
        <title>Genome of Geobacter sulfurreducens: metal reduction in subsurface environments.</title>
        <authorList>
            <person name="Methe B.A."/>
            <person name="Nelson K.E."/>
            <person name="Eisen J.A."/>
            <person name="Paulsen I.T."/>
            <person name="Nelson W.C."/>
            <person name="Heidelberg J.F."/>
            <person name="Wu D."/>
            <person name="Wu M."/>
            <person name="Ward N.L."/>
            <person name="Beanan M.J."/>
            <person name="Dodson R.J."/>
            <person name="Madupu R."/>
            <person name="Brinkac L.M."/>
            <person name="Daugherty S.C."/>
            <person name="DeBoy R.T."/>
            <person name="Durkin A.S."/>
            <person name="Gwinn M.L."/>
            <person name="Kolonay J.F."/>
            <person name="Sullivan S.A."/>
            <person name="Haft D.H."/>
            <person name="Selengut J."/>
            <person name="Davidsen T.M."/>
            <person name="Zafar N."/>
            <person name="White O."/>
            <person name="Tran B."/>
            <person name="Romero C."/>
            <person name="Forberger H.A."/>
            <person name="Weidman J.F."/>
            <person name="Khouri H.M."/>
            <person name="Feldblyum T.V."/>
            <person name="Utterback T.R."/>
            <person name="Van Aken S.E."/>
            <person name="Lovley D.R."/>
            <person name="Fraser C.M."/>
        </authorList>
    </citation>
    <scope>NUCLEOTIDE SEQUENCE [LARGE SCALE GENOMIC DNA]</scope>
    <source>
        <strain>ATCC 51573 / DSM 12127 / PCA</strain>
    </source>
</reference>
<name>PYRG_GEOSL</name>
<keyword id="KW-0067">ATP-binding</keyword>
<keyword id="KW-0315">Glutamine amidotransferase</keyword>
<keyword id="KW-0436">Ligase</keyword>
<keyword id="KW-0460">Magnesium</keyword>
<keyword id="KW-0479">Metal-binding</keyword>
<keyword id="KW-0547">Nucleotide-binding</keyword>
<keyword id="KW-0665">Pyrimidine biosynthesis</keyword>
<keyword id="KW-1185">Reference proteome</keyword>
<dbReference type="EC" id="6.3.4.2" evidence="1"/>
<dbReference type="EMBL" id="AE017180">
    <property type="protein sequence ID" value="AAR35271.1"/>
    <property type="molecule type" value="Genomic_DNA"/>
</dbReference>
<dbReference type="RefSeq" id="NP_952944.1">
    <property type="nucleotide sequence ID" value="NC_002939.5"/>
</dbReference>
<dbReference type="RefSeq" id="WP_010942540.1">
    <property type="nucleotide sequence ID" value="NC_002939.5"/>
</dbReference>
<dbReference type="SMR" id="Q74BY3"/>
<dbReference type="FunCoup" id="Q74BY3">
    <property type="interactions" value="473"/>
</dbReference>
<dbReference type="STRING" id="243231.GSU1895"/>
<dbReference type="EnsemblBacteria" id="AAR35271">
    <property type="protein sequence ID" value="AAR35271"/>
    <property type="gene ID" value="GSU1895"/>
</dbReference>
<dbReference type="KEGG" id="gsu:GSU1895"/>
<dbReference type="PATRIC" id="fig|243231.5.peg.1933"/>
<dbReference type="eggNOG" id="COG0504">
    <property type="taxonomic scope" value="Bacteria"/>
</dbReference>
<dbReference type="HOGENOM" id="CLU_011675_5_0_7"/>
<dbReference type="InParanoid" id="Q74BY3"/>
<dbReference type="OrthoDB" id="9801107at2"/>
<dbReference type="UniPathway" id="UPA00159">
    <property type="reaction ID" value="UER00277"/>
</dbReference>
<dbReference type="Proteomes" id="UP000000577">
    <property type="component" value="Chromosome"/>
</dbReference>
<dbReference type="GO" id="GO:0005829">
    <property type="term" value="C:cytosol"/>
    <property type="evidence" value="ECO:0000318"/>
    <property type="project" value="GO_Central"/>
</dbReference>
<dbReference type="GO" id="GO:0005524">
    <property type="term" value="F:ATP binding"/>
    <property type="evidence" value="ECO:0007669"/>
    <property type="project" value="UniProtKB-KW"/>
</dbReference>
<dbReference type="GO" id="GO:0003883">
    <property type="term" value="F:CTP synthase activity"/>
    <property type="evidence" value="ECO:0000318"/>
    <property type="project" value="GO_Central"/>
</dbReference>
<dbReference type="GO" id="GO:0004359">
    <property type="term" value="F:glutaminase activity"/>
    <property type="evidence" value="ECO:0007669"/>
    <property type="project" value="RHEA"/>
</dbReference>
<dbReference type="GO" id="GO:0042802">
    <property type="term" value="F:identical protein binding"/>
    <property type="evidence" value="ECO:0000318"/>
    <property type="project" value="GO_Central"/>
</dbReference>
<dbReference type="GO" id="GO:0046872">
    <property type="term" value="F:metal ion binding"/>
    <property type="evidence" value="ECO:0007669"/>
    <property type="project" value="UniProtKB-KW"/>
</dbReference>
<dbReference type="GO" id="GO:0044210">
    <property type="term" value="P:'de novo' CTP biosynthetic process"/>
    <property type="evidence" value="ECO:0007669"/>
    <property type="project" value="UniProtKB-UniRule"/>
</dbReference>
<dbReference type="GO" id="GO:0006241">
    <property type="term" value="P:CTP biosynthetic process"/>
    <property type="evidence" value="ECO:0000318"/>
    <property type="project" value="GO_Central"/>
</dbReference>
<dbReference type="GO" id="GO:0019856">
    <property type="term" value="P:pyrimidine nucleobase biosynthetic process"/>
    <property type="evidence" value="ECO:0000318"/>
    <property type="project" value="GO_Central"/>
</dbReference>
<dbReference type="CDD" id="cd03113">
    <property type="entry name" value="CTPS_N"/>
    <property type="match status" value="1"/>
</dbReference>
<dbReference type="CDD" id="cd01746">
    <property type="entry name" value="GATase1_CTP_Synthase"/>
    <property type="match status" value="1"/>
</dbReference>
<dbReference type="FunFam" id="3.40.50.300:FF:000009">
    <property type="entry name" value="CTP synthase"/>
    <property type="match status" value="1"/>
</dbReference>
<dbReference type="FunFam" id="3.40.50.880:FF:000002">
    <property type="entry name" value="CTP synthase"/>
    <property type="match status" value="1"/>
</dbReference>
<dbReference type="Gene3D" id="3.40.50.880">
    <property type="match status" value="1"/>
</dbReference>
<dbReference type="Gene3D" id="3.40.50.300">
    <property type="entry name" value="P-loop containing nucleotide triphosphate hydrolases"/>
    <property type="match status" value="1"/>
</dbReference>
<dbReference type="HAMAP" id="MF_01227">
    <property type="entry name" value="PyrG"/>
    <property type="match status" value="1"/>
</dbReference>
<dbReference type="InterPro" id="IPR029062">
    <property type="entry name" value="Class_I_gatase-like"/>
</dbReference>
<dbReference type="InterPro" id="IPR004468">
    <property type="entry name" value="CTP_synthase"/>
</dbReference>
<dbReference type="InterPro" id="IPR017456">
    <property type="entry name" value="CTP_synthase_N"/>
</dbReference>
<dbReference type="InterPro" id="IPR017926">
    <property type="entry name" value="GATASE"/>
</dbReference>
<dbReference type="InterPro" id="IPR033828">
    <property type="entry name" value="GATase1_CTP_Synthase"/>
</dbReference>
<dbReference type="InterPro" id="IPR027417">
    <property type="entry name" value="P-loop_NTPase"/>
</dbReference>
<dbReference type="NCBIfam" id="NF003792">
    <property type="entry name" value="PRK05380.1"/>
    <property type="match status" value="1"/>
</dbReference>
<dbReference type="NCBIfam" id="TIGR00337">
    <property type="entry name" value="PyrG"/>
    <property type="match status" value="1"/>
</dbReference>
<dbReference type="PANTHER" id="PTHR11550">
    <property type="entry name" value="CTP SYNTHASE"/>
    <property type="match status" value="1"/>
</dbReference>
<dbReference type="PANTHER" id="PTHR11550:SF0">
    <property type="entry name" value="CTP SYNTHASE-RELATED"/>
    <property type="match status" value="1"/>
</dbReference>
<dbReference type="Pfam" id="PF06418">
    <property type="entry name" value="CTP_synth_N"/>
    <property type="match status" value="1"/>
</dbReference>
<dbReference type="Pfam" id="PF00117">
    <property type="entry name" value="GATase"/>
    <property type="match status" value="1"/>
</dbReference>
<dbReference type="SUPFAM" id="SSF52317">
    <property type="entry name" value="Class I glutamine amidotransferase-like"/>
    <property type="match status" value="1"/>
</dbReference>
<dbReference type="SUPFAM" id="SSF52540">
    <property type="entry name" value="P-loop containing nucleoside triphosphate hydrolases"/>
    <property type="match status" value="1"/>
</dbReference>
<dbReference type="PROSITE" id="PS51273">
    <property type="entry name" value="GATASE_TYPE_1"/>
    <property type="match status" value="1"/>
</dbReference>
<feature type="chain" id="PRO_0000266126" description="CTP synthase">
    <location>
        <begin position="1"/>
        <end position="536"/>
    </location>
</feature>
<feature type="domain" description="Glutamine amidotransferase type-1" evidence="1">
    <location>
        <begin position="292"/>
        <end position="534"/>
    </location>
</feature>
<feature type="region of interest" description="Amidoligase domain" evidence="1">
    <location>
        <begin position="1"/>
        <end position="266"/>
    </location>
</feature>
<feature type="active site" description="Nucleophile; for glutamine hydrolysis" evidence="1">
    <location>
        <position position="381"/>
    </location>
</feature>
<feature type="active site" evidence="1">
    <location>
        <position position="507"/>
    </location>
</feature>
<feature type="active site" evidence="1">
    <location>
        <position position="509"/>
    </location>
</feature>
<feature type="binding site" evidence="1">
    <location>
        <position position="14"/>
    </location>
    <ligand>
        <name>CTP</name>
        <dbReference type="ChEBI" id="CHEBI:37563"/>
        <note>allosteric inhibitor</note>
    </ligand>
</feature>
<feature type="binding site" evidence="1">
    <location>
        <position position="14"/>
    </location>
    <ligand>
        <name>UTP</name>
        <dbReference type="ChEBI" id="CHEBI:46398"/>
    </ligand>
</feature>
<feature type="binding site" evidence="1">
    <location>
        <begin position="15"/>
        <end position="20"/>
    </location>
    <ligand>
        <name>ATP</name>
        <dbReference type="ChEBI" id="CHEBI:30616"/>
    </ligand>
</feature>
<feature type="binding site" evidence="1">
    <location>
        <position position="72"/>
    </location>
    <ligand>
        <name>ATP</name>
        <dbReference type="ChEBI" id="CHEBI:30616"/>
    </ligand>
</feature>
<feature type="binding site" evidence="1">
    <location>
        <position position="72"/>
    </location>
    <ligand>
        <name>Mg(2+)</name>
        <dbReference type="ChEBI" id="CHEBI:18420"/>
    </ligand>
</feature>
<feature type="binding site" evidence="1">
    <location>
        <position position="140"/>
    </location>
    <ligand>
        <name>Mg(2+)</name>
        <dbReference type="ChEBI" id="CHEBI:18420"/>
    </ligand>
</feature>
<feature type="binding site" evidence="1">
    <location>
        <begin position="147"/>
        <end position="149"/>
    </location>
    <ligand>
        <name>CTP</name>
        <dbReference type="ChEBI" id="CHEBI:37563"/>
        <note>allosteric inhibitor</note>
    </ligand>
</feature>
<feature type="binding site" evidence="1">
    <location>
        <begin position="187"/>
        <end position="192"/>
    </location>
    <ligand>
        <name>CTP</name>
        <dbReference type="ChEBI" id="CHEBI:37563"/>
        <note>allosteric inhibitor</note>
    </ligand>
</feature>
<feature type="binding site" evidence="1">
    <location>
        <begin position="187"/>
        <end position="192"/>
    </location>
    <ligand>
        <name>UTP</name>
        <dbReference type="ChEBI" id="CHEBI:46398"/>
    </ligand>
</feature>
<feature type="binding site" evidence="1">
    <location>
        <position position="223"/>
    </location>
    <ligand>
        <name>CTP</name>
        <dbReference type="ChEBI" id="CHEBI:37563"/>
        <note>allosteric inhibitor</note>
    </ligand>
</feature>
<feature type="binding site" evidence="1">
    <location>
        <position position="223"/>
    </location>
    <ligand>
        <name>UTP</name>
        <dbReference type="ChEBI" id="CHEBI:46398"/>
    </ligand>
</feature>
<feature type="binding site" evidence="1">
    <location>
        <position position="354"/>
    </location>
    <ligand>
        <name>L-glutamine</name>
        <dbReference type="ChEBI" id="CHEBI:58359"/>
    </ligand>
</feature>
<feature type="binding site" evidence="1">
    <location>
        <begin position="382"/>
        <end position="385"/>
    </location>
    <ligand>
        <name>L-glutamine</name>
        <dbReference type="ChEBI" id="CHEBI:58359"/>
    </ligand>
</feature>
<feature type="binding site" evidence="1">
    <location>
        <position position="405"/>
    </location>
    <ligand>
        <name>L-glutamine</name>
        <dbReference type="ChEBI" id="CHEBI:58359"/>
    </ligand>
</feature>
<feature type="binding site" evidence="1">
    <location>
        <position position="462"/>
    </location>
    <ligand>
        <name>L-glutamine</name>
        <dbReference type="ChEBI" id="CHEBI:58359"/>
    </ligand>
</feature>
<proteinExistence type="inferred from homology"/>
<protein>
    <recommendedName>
        <fullName evidence="1">CTP synthase</fullName>
        <ecNumber evidence="1">6.3.4.2</ecNumber>
    </recommendedName>
    <alternativeName>
        <fullName evidence="1">Cytidine 5'-triphosphate synthase</fullName>
    </alternativeName>
    <alternativeName>
        <fullName evidence="1">Cytidine triphosphate synthetase</fullName>
        <shortName evidence="1">CTP synthetase</shortName>
        <shortName evidence="1">CTPS</shortName>
    </alternativeName>
    <alternativeName>
        <fullName evidence="1">UTP--ammonia ligase</fullName>
    </alternativeName>
</protein>
<comment type="function">
    <text evidence="1">Catalyzes the ATP-dependent amination of UTP to CTP with either L-glutamine or ammonia as the source of nitrogen. Regulates intracellular CTP levels through interactions with the four ribonucleotide triphosphates.</text>
</comment>
<comment type="catalytic activity">
    <reaction evidence="1">
        <text>UTP + L-glutamine + ATP + H2O = CTP + L-glutamate + ADP + phosphate + 2 H(+)</text>
        <dbReference type="Rhea" id="RHEA:26426"/>
        <dbReference type="ChEBI" id="CHEBI:15377"/>
        <dbReference type="ChEBI" id="CHEBI:15378"/>
        <dbReference type="ChEBI" id="CHEBI:29985"/>
        <dbReference type="ChEBI" id="CHEBI:30616"/>
        <dbReference type="ChEBI" id="CHEBI:37563"/>
        <dbReference type="ChEBI" id="CHEBI:43474"/>
        <dbReference type="ChEBI" id="CHEBI:46398"/>
        <dbReference type="ChEBI" id="CHEBI:58359"/>
        <dbReference type="ChEBI" id="CHEBI:456216"/>
        <dbReference type="EC" id="6.3.4.2"/>
    </reaction>
</comment>
<comment type="catalytic activity">
    <reaction evidence="1">
        <text>L-glutamine + H2O = L-glutamate + NH4(+)</text>
        <dbReference type="Rhea" id="RHEA:15889"/>
        <dbReference type="ChEBI" id="CHEBI:15377"/>
        <dbReference type="ChEBI" id="CHEBI:28938"/>
        <dbReference type="ChEBI" id="CHEBI:29985"/>
        <dbReference type="ChEBI" id="CHEBI:58359"/>
    </reaction>
</comment>
<comment type="catalytic activity">
    <reaction evidence="1">
        <text>UTP + NH4(+) + ATP = CTP + ADP + phosphate + 2 H(+)</text>
        <dbReference type="Rhea" id="RHEA:16597"/>
        <dbReference type="ChEBI" id="CHEBI:15378"/>
        <dbReference type="ChEBI" id="CHEBI:28938"/>
        <dbReference type="ChEBI" id="CHEBI:30616"/>
        <dbReference type="ChEBI" id="CHEBI:37563"/>
        <dbReference type="ChEBI" id="CHEBI:43474"/>
        <dbReference type="ChEBI" id="CHEBI:46398"/>
        <dbReference type="ChEBI" id="CHEBI:456216"/>
    </reaction>
</comment>
<comment type="activity regulation">
    <text evidence="1">Allosterically activated by GTP, when glutamine is the substrate; GTP has no effect on the reaction when ammonia is the substrate. The allosteric effector GTP functions by stabilizing the protein conformation that binds the tetrahedral intermediate(s) formed during glutamine hydrolysis. Inhibited by the product CTP, via allosteric rather than competitive inhibition.</text>
</comment>
<comment type="pathway">
    <text evidence="1">Pyrimidine metabolism; CTP biosynthesis via de novo pathway; CTP from UDP: step 2/2.</text>
</comment>
<comment type="subunit">
    <text evidence="1">Homotetramer.</text>
</comment>
<comment type="miscellaneous">
    <text evidence="1">CTPSs have evolved a hybrid strategy for distinguishing between UTP and CTP. The overlapping regions of the product feedback inhibitory and substrate sites recognize a common feature in both compounds, the triphosphate moiety. To differentiate isosteric substrate and product pyrimidine rings, an additional pocket far from the expected kinase/ligase catalytic site, specifically recognizes the cytosine and ribose portions of the product inhibitor.</text>
</comment>
<comment type="similarity">
    <text evidence="1">Belongs to the CTP synthase family.</text>
</comment>